<feature type="chain" id="PRO_0000241353" description="Large ribosomal subunit protein uL3">
    <location>
        <begin position="1"/>
        <end position="212"/>
    </location>
</feature>
<feature type="modified residue" description="N5-methylglutamine" evidence="1">
    <location>
        <position position="153"/>
    </location>
</feature>
<organism>
    <name type="scientific">Idiomarina loihiensis (strain ATCC BAA-735 / DSM 15497 / L2-TR)</name>
    <dbReference type="NCBI Taxonomy" id="283942"/>
    <lineage>
        <taxon>Bacteria</taxon>
        <taxon>Pseudomonadati</taxon>
        <taxon>Pseudomonadota</taxon>
        <taxon>Gammaproteobacteria</taxon>
        <taxon>Alteromonadales</taxon>
        <taxon>Idiomarinaceae</taxon>
        <taxon>Idiomarina</taxon>
    </lineage>
</organism>
<evidence type="ECO:0000255" key="1">
    <source>
        <dbReference type="HAMAP-Rule" id="MF_01325"/>
    </source>
</evidence>
<evidence type="ECO:0000305" key="2"/>
<dbReference type="EMBL" id="AE017340">
    <property type="protein sequence ID" value="AAV82756.1"/>
    <property type="molecule type" value="Genomic_DNA"/>
</dbReference>
<dbReference type="RefSeq" id="WP_011235153.1">
    <property type="nucleotide sequence ID" value="NC_006512.1"/>
</dbReference>
<dbReference type="SMR" id="Q5QXZ0"/>
<dbReference type="STRING" id="283942.IL1924"/>
<dbReference type="GeneID" id="41337112"/>
<dbReference type="KEGG" id="ilo:IL1924"/>
<dbReference type="eggNOG" id="COG0087">
    <property type="taxonomic scope" value="Bacteria"/>
</dbReference>
<dbReference type="HOGENOM" id="CLU_044142_4_1_6"/>
<dbReference type="OrthoDB" id="9806135at2"/>
<dbReference type="Proteomes" id="UP000001171">
    <property type="component" value="Chromosome"/>
</dbReference>
<dbReference type="GO" id="GO:0022625">
    <property type="term" value="C:cytosolic large ribosomal subunit"/>
    <property type="evidence" value="ECO:0007669"/>
    <property type="project" value="TreeGrafter"/>
</dbReference>
<dbReference type="GO" id="GO:0019843">
    <property type="term" value="F:rRNA binding"/>
    <property type="evidence" value="ECO:0007669"/>
    <property type="project" value="UniProtKB-UniRule"/>
</dbReference>
<dbReference type="GO" id="GO:0003735">
    <property type="term" value="F:structural constituent of ribosome"/>
    <property type="evidence" value="ECO:0007669"/>
    <property type="project" value="InterPro"/>
</dbReference>
<dbReference type="GO" id="GO:0006412">
    <property type="term" value="P:translation"/>
    <property type="evidence" value="ECO:0007669"/>
    <property type="project" value="UniProtKB-UniRule"/>
</dbReference>
<dbReference type="FunFam" id="2.40.30.10:FF:000004">
    <property type="entry name" value="50S ribosomal protein L3"/>
    <property type="match status" value="1"/>
</dbReference>
<dbReference type="FunFam" id="3.30.160.810:FF:000001">
    <property type="entry name" value="50S ribosomal protein L3"/>
    <property type="match status" value="1"/>
</dbReference>
<dbReference type="Gene3D" id="3.30.160.810">
    <property type="match status" value="1"/>
</dbReference>
<dbReference type="Gene3D" id="2.40.30.10">
    <property type="entry name" value="Translation factors"/>
    <property type="match status" value="1"/>
</dbReference>
<dbReference type="HAMAP" id="MF_01325_B">
    <property type="entry name" value="Ribosomal_uL3_B"/>
    <property type="match status" value="1"/>
</dbReference>
<dbReference type="InterPro" id="IPR000597">
    <property type="entry name" value="Ribosomal_uL3"/>
</dbReference>
<dbReference type="InterPro" id="IPR019927">
    <property type="entry name" value="Ribosomal_uL3_bac/org-type"/>
</dbReference>
<dbReference type="InterPro" id="IPR019926">
    <property type="entry name" value="Ribosomal_uL3_CS"/>
</dbReference>
<dbReference type="InterPro" id="IPR009000">
    <property type="entry name" value="Transl_B-barrel_sf"/>
</dbReference>
<dbReference type="NCBIfam" id="TIGR03625">
    <property type="entry name" value="L3_bact"/>
    <property type="match status" value="1"/>
</dbReference>
<dbReference type="PANTHER" id="PTHR11229">
    <property type="entry name" value="50S RIBOSOMAL PROTEIN L3"/>
    <property type="match status" value="1"/>
</dbReference>
<dbReference type="PANTHER" id="PTHR11229:SF16">
    <property type="entry name" value="LARGE RIBOSOMAL SUBUNIT PROTEIN UL3C"/>
    <property type="match status" value="1"/>
</dbReference>
<dbReference type="Pfam" id="PF00297">
    <property type="entry name" value="Ribosomal_L3"/>
    <property type="match status" value="1"/>
</dbReference>
<dbReference type="SUPFAM" id="SSF50447">
    <property type="entry name" value="Translation proteins"/>
    <property type="match status" value="1"/>
</dbReference>
<dbReference type="PROSITE" id="PS00474">
    <property type="entry name" value="RIBOSOMAL_L3"/>
    <property type="match status" value="1"/>
</dbReference>
<reference key="1">
    <citation type="journal article" date="2004" name="Proc. Natl. Acad. Sci. U.S.A.">
        <title>Genome sequence of the deep-sea gamma-proteobacterium Idiomarina loihiensis reveals amino acid fermentation as a source of carbon and energy.</title>
        <authorList>
            <person name="Hou S."/>
            <person name="Saw J.H."/>
            <person name="Lee K.S."/>
            <person name="Freitas T.A."/>
            <person name="Belisle C."/>
            <person name="Kawarabayasi Y."/>
            <person name="Donachie S.P."/>
            <person name="Pikina A."/>
            <person name="Galperin M.Y."/>
            <person name="Koonin E.V."/>
            <person name="Makarova K.S."/>
            <person name="Omelchenko M.V."/>
            <person name="Sorokin A."/>
            <person name="Wolf Y.I."/>
            <person name="Li Q.X."/>
            <person name="Keum Y.S."/>
            <person name="Campbell S."/>
            <person name="Denery J."/>
            <person name="Aizawa S."/>
            <person name="Shibata S."/>
            <person name="Malahoff A."/>
            <person name="Alam M."/>
        </authorList>
    </citation>
    <scope>NUCLEOTIDE SEQUENCE [LARGE SCALE GENOMIC DNA]</scope>
    <source>
        <strain>ATCC BAA-735 / DSM 15497 / L2-TR</strain>
    </source>
</reference>
<protein>
    <recommendedName>
        <fullName evidence="1">Large ribosomal subunit protein uL3</fullName>
    </recommendedName>
    <alternativeName>
        <fullName evidence="2">50S ribosomal protein L3</fullName>
    </alternativeName>
</protein>
<sequence>MAIGLVGRKVGMTRVFQEDGASVPVTVIEVLANRVTQVKSDDTDGYRALQVTTGEKKASRVTKPLAGHFAKAGTEAGRGLWEFRLQNGEGEDYAVGSELTVDIFAEVNKVDVTGTSKGKGFAGTVKRWNFSMQDATHGNSLSHRAPGSIGQNQSPGKVFKGKKMAGQMGNEQVTTQSLELVRVDAERSLLLIKGAVPGATGSDVIVKPAVKA</sequence>
<comment type="function">
    <text evidence="1">One of the primary rRNA binding proteins, it binds directly near the 3'-end of the 23S rRNA, where it nucleates assembly of the 50S subunit.</text>
</comment>
<comment type="subunit">
    <text evidence="1">Part of the 50S ribosomal subunit. Forms a cluster with proteins L14 and L19.</text>
</comment>
<comment type="PTM">
    <text evidence="1">Methylated by PrmB.</text>
</comment>
<comment type="similarity">
    <text evidence="1">Belongs to the universal ribosomal protein uL3 family.</text>
</comment>
<proteinExistence type="inferred from homology"/>
<keyword id="KW-0488">Methylation</keyword>
<keyword id="KW-1185">Reference proteome</keyword>
<keyword id="KW-0687">Ribonucleoprotein</keyword>
<keyword id="KW-0689">Ribosomal protein</keyword>
<keyword id="KW-0694">RNA-binding</keyword>
<keyword id="KW-0699">rRNA-binding</keyword>
<gene>
    <name evidence="1" type="primary">rplC</name>
    <name type="ordered locus">IL1924</name>
</gene>
<name>RL3_IDILO</name>
<accession>Q5QXZ0</accession>